<reference key="1">
    <citation type="journal article" date="1995" name="Nature">
        <title>A stomatin-like protein necessary for mechanosensation in C. elegans.</title>
        <authorList>
            <person name="Huang M."/>
            <person name="Gu G."/>
            <person name="Ferguson E.L."/>
            <person name="Chalfie M."/>
        </authorList>
    </citation>
    <scope>NUCLEOTIDE SEQUENCE [GENOMIC DNA / MRNA]</scope>
    <source>
        <strain>Bristol N2</strain>
    </source>
</reference>
<reference key="2">
    <citation type="journal article" date="1998" name="Science">
        <title>Genome sequence of the nematode C. elegans: a platform for investigating biology.</title>
        <authorList>
            <consortium name="The C. elegans sequencing consortium"/>
        </authorList>
    </citation>
    <scope>NUCLEOTIDE SEQUENCE [LARGE SCALE GENOMIC DNA]</scope>
    <source>
        <strain>Bristol N2</strain>
    </source>
</reference>
<reference key="3">
    <citation type="journal article" date="2002" name="Nature">
        <title>The mechanosensory protein MEC-6 is a subunit of the C. elegans touch-cell degenerin channel.</title>
        <authorList>
            <person name="Chelur D.S."/>
            <person name="Ernstrom G.G."/>
            <person name="Goodman M.B."/>
            <person name="Yao C.A."/>
            <person name="Chen L."/>
            <person name="O'Hagan R."/>
            <person name="Chalfie M."/>
        </authorList>
    </citation>
    <scope>FUNCTION</scope>
    <scope>IDENTIFICATION IN THE DEGENERIN CHANNEL COMPLEX</scope>
    <scope>INTERACTION WITH MEC-6 AND MEC-4</scope>
</reference>
<dbReference type="EMBL" id="U26736">
    <property type="protein sequence ID" value="AAA87552.1"/>
    <property type="molecule type" value="Genomic_DNA"/>
</dbReference>
<dbReference type="EMBL" id="U26735">
    <property type="protein sequence ID" value="AAA87551.1"/>
    <property type="molecule type" value="mRNA"/>
</dbReference>
<dbReference type="EMBL" id="BX284606">
    <property type="protein sequence ID" value="CCD83468.1"/>
    <property type="molecule type" value="Genomic_DNA"/>
</dbReference>
<dbReference type="PIR" id="S60260">
    <property type="entry name" value="S60260"/>
</dbReference>
<dbReference type="RefSeq" id="NP_741797.1">
    <property type="nucleotide sequence ID" value="NM_171691.6"/>
</dbReference>
<dbReference type="SMR" id="Q27433"/>
<dbReference type="BioGRID" id="45759">
    <property type="interactions" value="5"/>
</dbReference>
<dbReference type="DIP" id="DIP-61307N"/>
<dbReference type="FunCoup" id="Q27433">
    <property type="interactions" value="207"/>
</dbReference>
<dbReference type="IntAct" id="Q27433">
    <property type="interactions" value="1"/>
</dbReference>
<dbReference type="STRING" id="6239.F14D12.4e.1"/>
<dbReference type="TCDB" id="1.A.6.2.2">
    <property type="family name" value="the epithelial na(+) channel (enac) family"/>
</dbReference>
<dbReference type="SwissPalm" id="Q27433"/>
<dbReference type="PaxDb" id="6239-F14D12.4a"/>
<dbReference type="EnsemblMetazoa" id="F14D12.4a.1">
    <property type="protein sequence ID" value="F14D12.4a.1"/>
    <property type="gene ID" value="WBGene00003166"/>
</dbReference>
<dbReference type="GeneID" id="180826"/>
<dbReference type="KEGG" id="cel:CELE_F14D12.4"/>
<dbReference type="UCSC" id="F14D12.4a">
    <property type="organism name" value="c. elegans"/>
</dbReference>
<dbReference type="AGR" id="WB:WBGene00003166"/>
<dbReference type="CTD" id="180826"/>
<dbReference type="WormBase" id="F14D12.4a">
    <property type="protein sequence ID" value="CE04393"/>
    <property type="gene ID" value="WBGene00003166"/>
    <property type="gene designation" value="mec-2"/>
</dbReference>
<dbReference type="eggNOG" id="KOG2621">
    <property type="taxonomic scope" value="Eukaryota"/>
</dbReference>
<dbReference type="InParanoid" id="Q27433"/>
<dbReference type="OrthoDB" id="2105077at2759"/>
<dbReference type="PhylomeDB" id="Q27433"/>
<dbReference type="PRO" id="PR:Q27433"/>
<dbReference type="Proteomes" id="UP000001940">
    <property type="component" value="Chromosome X"/>
</dbReference>
<dbReference type="Bgee" id="WBGene00003166">
    <property type="expression patterns" value="Expressed in pharyngeal muscle cell (C elegans) and 3 other cell types or tissues"/>
</dbReference>
<dbReference type="ExpressionAtlas" id="Q27433">
    <property type="expression patterns" value="baseline and differential"/>
</dbReference>
<dbReference type="GO" id="GO:0043005">
    <property type="term" value="C:neuron projection"/>
    <property type="evidence" value="ECO:0000314"/>
    <property type="project" value="WormBase"/>
</dbReference>
<dbReference type="GO" id="GO:0032589">
    <property type="term" value="C:neuron projection membrane"/>
    <property type="evidence" value="ECO:0000314"/>
    <property type="project" value="WormBase"/>
</dbReference>
<dbReference type="GO" id="GO:0005886">
    <property type="term" value="C:plasma membrane"/>
    <property type="evidence" value="ECO:0000318"/>
    <property type="project" value="GO_Central"/>
</dbReference>
<dbReference type="GO" id="GO:0015485">
    <property type="term" value="F:cholesterol binding"/>
    <property type="evidence" value="ECO:0000314"/>
    <property type="project" value="WormBase"/>
</dbReference>
<dbReference type="GO" id="GO:0005272">
    <property type="term" value="F:sodium channel activity"/>
    <property type="evidence" value="ECO:0007669"/>
    <property type="project" value="UniProtKB-KW"/>
</dbReference>
<dbReference type="GO" id="GO:0050976">
    <property type="term" value="P:detection of mechanical stimulus involved in sensory perception of touch"/>
    <property type="evidence" value="ECO:0000316"/>
    <property type="project" value="UniProtKB"/>
</dbReference>
<dbReference type="GO" id="GO:0007638">
    <property type="term" value="P:mechanosensory behavior"/>
    <property type="evidence" value="ECO:0000315"/>
    <property type="project" value="WormBase"/>
</dbReference>
<dbReference type="GO" id="GO:1905789">
    <property type="term" value="P:positive regulation of detection of mechanical stimulus involved in sensory perception of touch"/>
    <property type="evidence" value="ECO:0000316"/>
    <property type="project" value="UniProtKB"/>
</dbReference>
<dbReference type="GO" id="GO:1905792">
    <property type="term" value="P:positive regulation of mechanosensory behavior"/>
    <property type="evidence" value="ECO:0000316"/>
    <property type="project" value="UniProtKB"/>
</dbReference>
<dbReference type="GO" id="GO:0006813">
    <property type="term" value="P:potassium ion transport"/>
    <property type="evidence" value="ECO:0007669"/>
    <property type="project" value="UniProtKB-KW"/>
</dbReference>
<dbReference type="GO" id="GO:0009612">
    <property type="term" value="P:response to mechanical stimulus"/>
    <property type="evidence" value="ECO:0000315"/>
    <property type="project" value="WormBase"/>
</dbReference>
<dbReference type="CDD" id="cd03403">
    <property type="entry name" value="SPFH_stomatin"/>
    <property type="match status" value="1"/>
</dbReference>
<dbReference type="FunFam" id="3.30.479.30:FF:000002">
    <property type="entry name" value="band 7 protein AGAP004871"/>
    <property type="match status" value="1"/>
</dbReference>
<dbReference type="Gene3D" id="6.10.250.2090">
    <property type="match status" value="1"/>
</dbReference>
<dbReference type="Gene3D" id="3.30.479.30">
    <property type="entry name" value="Band 7 domain"/>
    <property type="match status" value="1"/>
</dbReference>
<dbReference type="InterPro" id="IPR043202">
    <property type="entry name" value="Band-7_stomatin-like"/>
</dbReference>
<dbReference type="InterPro" id="IPR001107">
    <property type="entry name" value="Band_7"/>
</dbReference>
<dbReference type="InterPro" id="IPR036013">
    <property type="entry name" value="Band_7/SPFH_dom_sf"/>
</dbReference>
<dbReference type="InterPro" id="IPR018080">
    <property type="entry name" value="Band_7/stomatin-like_CS"/>
</dbReference>
<dbReference type="InterPro" id="IPR001972">
    <property type="entry name" value="Stomatin_HflK_fam"/>
</dbReference>
<dbReference type="PANTHER" id="PTHR10264:SF19">
    <property type="entry name" value="AT06885P-RELATED"/>
    <property type="match status" value="1"/>
</dbReference>
<dbReference type="PANTHER" id="PTHR10264">
    <property type="entry name" value="BAND 7 PROTEIN-RELATED"/>
    <property type="match status" value="1"/>
</dbReference>
<dbReference type="Pfam" id="PF01145">
    <property type="entry name" value="Band_7"/>
    <property type="match status" value="1"/>
</dbReference>
<dbReference type="PRINTS" id="PR00721">
    <property type="entry name" value="STOMATIN"/>
</dbReference>
<dbReference type="SMART" id="SM00244">
    <property type="entry name" value="PHB"/>
    <property type="match status" value="1"/>
</dbReference>
<dbReference type="SUPFAM" id="SSF117892">
    <property type="entry name" value="Band 7/SPFH domain"/>
    <property type="match status" value="1"/>
</dbReference>
<dbReference type="PROSITE" id="PS01270">
    <property type="entry name" value="BAND_7"/>
    <property type="match status" value="1"/>
</dbReference>
<feature type="chain" id="PRO_0000094038" description="Mechanosensory protein 2">
    <location>
        <begin position="1"/>
        <end position="481"/>
    </location>
</feature>
<feature type="transmembrane region" description="Helical" evidence="1">
    <location>
        <begin position="115"/>
        <end position="135"/>
    </location>
</feature>
<feature type="region of interest" description="Disordered" evidence="2">
    <location>
        <begin position="1"/>
        <end position="67"/>
    </location>
</feature>
<feature type="region of interest" description="Disordered" evidence="2">
    <location>
        <begin position="80"/>
        <end position="104"/>
    </location>
</feature>
<feature type="region of interest" description="Disordered" evidence="2">
    <location>
        <begin position="403"/>
        <end position="481"/>
    </location>
</feature>
<feature type="compositionally biased region" description="Low complexity" evidence="2">
    <location>
        <begin position="1"/>
        <end position="22"/>
    </location>
</feature>
<feature type="compositionally biased region" description="Polar residues" evidence="2">
    <location>
        <begin position="27"/>
        <end position="38"/>
    </location>
</feature>
<feature type="compositionally biased region" description="Basic and acidic residues" evidence="2">
    <location>
        <begin position="86"/>
        <end position="104"/>
    </location>
</feature>
<feature type="compositionally biased region" description="Gly residues" evidence="2">
    <location>
        <begin position="403"/>
        <end position="421"/>
    </location>
</feature>
<feature type="compositionally biased region" description="Low complexity" evidence="2">
    <location>
        <begin position="433"/>
        <end position="447"/>
    </location>
</feature>
<feature type="compositionally biased region" description="Polar residues" evidence="2">
    <location>
        <begin position="463"/>
        <end position="473"/>
    </location>
</feature>
<proteinExistence type="evidence at protein level"/>
<comment type="function">
    <text evidence="3">Subunit of an amiloride-sensitive cation channel (degenerin channel complex) permeable for sodium, potassium, lithium and N-methylglucamine, and required for mechanosensory transduction (touch sensitivity) (PubMed:12478294). Positively regulates the activity of the putative mechanosensory transduction channel. May link the mechanosensory channel and the microtubule cytoskeleton of the touch receptor neurons. Required for the function of a set of six touch receptor neurons.</text>
</comment>
<comment type="subunit">
    <text evidence="3">Component of a non-voltage-gated amiloride-sensitive cation channel complex (also called the degenerin channel complex) composed of at least the mec-2, mec-4, mec-6 and mec-10 subunits; the complex mediates mechanotransduction in touch cells (PubMed:12478294). Interacts with mec-6 and mec-4 (PubMed:12478294).</text>
</comment>
<comment type="subcellular location">
    <subcellularLocation>
        <location evidence="4">Membrane</location>
        <topology evidence="4">Single-pass membrane protein</topology>
    </subcellularLocation>
</comment>
<comment type="similarity">
    <text evidence="4">Belongs to the band 7/mec-2 family.</text>
</comment>
<name>MEC2_CAEEL</name>
<gene>
    <name evidence="5" type="primary">mec-2</name>
    <name evidence="5" type="ORF">F14D12.4</name>
</gene>
<sequence length="481" mass="51900">MSATMSSARNSVVSLSSNGSVKVETRLVSNERSSSIQQEGAMLPSSSSKDDDLLSTSSDEVENMATRTLQQLEESTSIISANSDDDSVKKEKQAEKDVEKGNGKEEKANIQNEFGVCGWILTILSYLLIFFTLPISACMCIKVVQEYERAVIFRLGRLMPGGAKGPGIFFIVPCIDTYRKVDLRVLSFEVPPQEILSKDSVTVAVDAVVYFRISNATISVTNVEDAARSTKLLAQTTLRNILGTKTLAEMLSDREAISHQMQTTLDEATEPWGVKVERVEVKDVRLPVQLQRAMAAEAEAAREARAKVIVAEGEQKASRALKEAAEVIAESPSALQLRYLQTLNSISAEKNSTIIFPFPIDLLSAFLQRTPPKVEEPPSLPKKIRSCCLYKYPDWVQGMVGSEGGGGHGHSHGGGGGGLGSSQGAFHPSQAGSGPSTTTTSGRPLLRSMREAQFHSAAPPISAPNQSQTSVSQLDPALLIR</sequence>
<accession>Q27433</accession>
<keyword id="KW-0407">Ion channel</keyword>
<keyword id="KW-0406">Ion transport</keyword>
<keyword id="KW-0472">Membrane</keyword>
<keyword id="KW-0630">Potassium</keyword>
<keyword id="KW-0633">Potassium transport</keyword>
<keyword id="KW-1185">Reference proteome</keyword>
<keyword id="KW-0915">Sodium</keyword>
<keyword id="KW-0894">Sodium channel</keyword>
<keyword id="KW-0739">Sodium transport</keyword>
<keyword id="KW-0812">Transmembrane</keyword>
<keyword id="KW-1133">Transmembrane helix</keyword>
<keyword id="KW-0813">Transport</keyword>
<evidence type="ECO:0000255" key="1"/>
<evidence type="ECO:0000256" key="2">
    <source>
        <dbReference type="SAM" id="MobiDB-lite"/>
    </source>
</evidence>
<evidence type="ECO:0000269" key="3">
    <source>
    </source>
</evidence>
<evidence type="ECO:0000305" key="4"/>
<evidence type="ECO:0000312" key="5">
    <source>
        <dbReference type="WormBase" id="F14D12.4a"/>
    </source>
</evidence>
<organism>
    <name type="scientific">Caenorhabditis elegans</name>
    <dbReference type="NCBI Taxonomy" id="6239"/>
    <lineage>
        <taxon>Eukaryota</taxon>
        <taxon>Metazoa</taxon>
        <taxon>Ecdysozoa</taxon>
        <taxon>Nematoda</taxon>
        <taxon>Chromadorea</taxon>
        <taxon>Rhabditida</taxon>
        <taxon>Rhabditina</taxon>
        <taxon>Rhabditomorpha</taxon>
        <taxon>Rhabditoidea</taxon>
        <taxon>Rhabditidae</taxon>
        <taxon>Peloderinae</taxon>
        <taxon>Caenorhabditis</taxon>
    </lineage>
</organism>
<protein>
    <recommendedName>
        <fullName>Mechanosensory protein 2</fullName>
    </recommendedName>
</protein>